<reference key="1">
    <citation type="submission" date="2006-10" db="EMBL/GenBank/DDBJ databases">
        <authorList>
            <person name="Fleischmann R.D."/>
            <person name="Dodson R.J."/>
            <person name="Haft D.H."/>
            <person name="Merkel J.S."/>
            <person name="Nelson W.C."/>
            <person name="Fraser C.M."/>
        </authorList>
    </citation>
    <scope>NUCLEOTIDE SEQUENCE [LARGE SCALE GENOMIC DNA]</scope>
    <source>
        <strain>ATCC 700084 / mc(2)155</strain>
    </source>
</reference>
<reference key="2">
    <citation type="journal article" date="2007" name="Genome Biol.">
        <title>Interrupted coding sequences in Mycobacterium smegmatis: authentic mutations or sequencing errors?</title>
        <authorList>
            <person name="Deshayes C."/>
            <person name="Perrodou E."/>
            <person name="Gallien S."/>
            <person name="Euphrasie D."/>
            <person name="Schaeffer C."/>
            <person name="Van-Dorsselaer A."/>
            <person name="Poch O."/>
            <person name="Lecompte O."/>
            <person name="Reyrat J.-M."/>
        </authorList>
    </citation>
    <scope>NUCLEOTIDE SEQUENCE [LARGE SCALE GENOMIC DNA]</scope>
    <source>
        <strain>ATCC 700084 / mc(2)155</strain>
    </source>
</reference>
<reference key="3">
    <citation type="journal article" date="2009" name="Genome Res.">
        <title>Ortho-proteogenomics: multiple proteomes investigation through orthology and a new MS-based protocol.</title>
        <authorList>
            <person name="Gallien S."/>
            <person name="Perrodou E."/>
            <person name="Carapito C."/>
            <person name="Deshayes C."/>
            <person name="Reyrat J.-M."/>
            <person name="Van Dorsselaer A."/>
            <person name="Poch O."/>
            <person name="Schaeffer C."/>
            <person name="Lecompte O."/>
        </authorList>
    </citation>
    <scope>NUCLEOTIDE SEQUENCE [LARGE SCALE GENOMIC DNA]</scope>
    <source>
        <strain>ATCC 700084 / mc(2)155</strain>
    </source>
</reference>
<reference key="4">
    <citation type="journal article" date="2005" name="Anal. Biochem.">
        <title>Kinetic measurements and mechanism determination of Stf0 sulfotransferase using mass spectrometry.</title>
        <authorList>
            <person name="Pi N."/>
            <person name="Hoang M.B."/>
            <person name="Gao H."/>
            <person name="Mougous J.D."/>
            <person name="Bertozzi C.R."/>
            <person name="Leary J.A."/>
        </authorList>
    </citation>
    <scope>REACTION MECHANISM</scope>
    <scope>BIOPHYSICOCHEMICAL PROPERTIES</scope>
</reference>
<reference key="5">
    <citation type="journal article" date="2004" name="Nat. Struct. Mol. Biol.">
        <title>Identification, function and structure of the mycobacterial sulfotransferase that initiates sulfolipid-1 biosynthesis.</title>
        <authorList>
            <person name="Mougous J.D."/>
            <person name="Petzold C.J."/>
            <person name="Senaratne R.H."/>
            <person name="Lee D.H."/>
            <person name="Akey D.L."/>
            <person name="Lin F.L."/>
            <person name="Munchel S.E."/>
            <person name="Pratt M.R."/>
            <person name="Riley L.W."/>
            <person name="Leary J.A."/>
            <person name="Berger J.M."/>
            <person name="Bertozzi C.R."/>
        </authorList>
    </citation>
    <scope>X-RAY CRYSTALLOGRAPHY (2.60 ANGSTROMS) IN COMPLEX WITH ALPHA,ALPHA-TREHALOSE</scope>
    <scope>IDENTIFICATION</scope>
    <scope>FUNCTION</scope>
    <scope>CATALYTIC ACTIVITY</scope>
    <scope>BIOPHYSICOCHEMICAL PROPERTIES</scope>
    <scope>SUBSTRATE SPECIFICITY</scope>
    <scope>DISRUPTION PHENOTYPE</scope>
    <scope>PATHWAY</scope>
    <scope>SUBUNIT</scope>
    <scope>MUTAGENESIS OF GLU-33 AND GLU-36</scope>
    <scope>ACTIVE SITE</scope>
</reference>
<sequence length="267" mass="30291">MSDHPTAYLVLASQRSGSTLLVESLRATGVAGEPQEFFQYLPNTSMSPQPREWFADVEDQSILRLLDPLIEGKPDLAPATIWRDYIQTVGRTPNGVWGGKLMWNQTPLLVQRAKDLPDRSGSGLLSAIRDVVGSDPVLIHIHRPDVVSQAVSFWRAVQTRVWRGRPDPVRDARAEYHAGAIAHVITMLRAQEEGWRAWFTEENVEPIDVDYPYLWRNLTEVVGTVLEALGQDPRLAPKPVLERQADQRSDEWVERYRRDAQRDGLPL</sequence>
<feature type="chain" id="PRO_0000434783" description="Trehalose 2-sulfotransferase">
    <location>
        <begin position="1"/>
        <end position="267"/>
    </location>
</feature>
<feature type="active site" description="Proton acceptor" evidence="5">
    <location>
        <position position="36"/>
    </location>
</feature>
<feature type="binding site" evidence="1 8">
    <location>
        <position position="14"/>
    </location>
    <ligand>
        <name>alpha,alpha-trehalose</name>
        <dbReference type="ChEBI" id="CHEBI:16551"/>
    </ligand>
</feature>
<feature type="binding site" evidence="1 8">
    <location>
        <begin position="33"/>
        <end position="39"/>
    </location>
    <ligand>
        <name>alpha,alpha-trehalose</name>
        <dbReference type="ChEBI" id="CHEBI:16551"/>
    </ligand>
</feature>
<feature type="binding site" evidence="1 8">
    <location>
        <position position="48"/>
    </location>
    <ligand>
        <name>alpha,alpha-trehalose</name>
        <dbReference type="ChEBI" id="CHEBI:16551"/>
    </ligand>
</feature>
<feature type="binding site" evidence="1 8">
    <location>
        <position position="53"/>
    </location>
    <ligand>
        <name>alpha,alpha-trehalose</name>
        <dbReference type="ChEBI" id="CHEBI:16551"/>
    </ligand>
</feature>
<feature type="mutagenesis site" description="4-fold decrease in catalytic efficiency due to a reduction in both trehalose affinity and reaction rate." evidence="1">
    <original>E</original>
    <variation>A</variation>
    <location>
        <position position="33"/>
    </location>
</feature>
<feature type="mutagenesis site" description="100-fold decrease in reaction rate and 3-fold increase in trehalose affinity." evidence="1">
    <original>E</original>
    <variation>A</variation>
    <location>
        <position position="36"/>
    </location>
</feature>
<protein>
    <recommendedName>
        <fullName evidence="5">Trehalose 2-sulfotransferase</fullName>
        <ecNumber evidence="1">2.8.2.37</ecNumber>
    </recommendedName>
</protein>
<gene>
    <name evidence="3" type="primary">stf0</name>
    <name evidence="6" type="ordered locus">MSMEG_0630</name>
    <name evidence="7" type="ordered locus">MSMEI_0614</name>
</gene>
<organism>
    <name type="scientific">Mycolicibacterium smegmatis (strain ATCC 700084 / mc(2)155)</name>
    <name type="common">Mycobacterium smegmatis</name>
    <dbReference type="NCBI Taxonomy" id="246196"/>
    <lineage>
        <taxon>Bacteria</taxon>
        <taxon>Bacillati</taxon>
        <taxon>Actinomycetota</taxon>
        <taxon>Actinomycetes</taxon>
        <taxon>Mycobacteriales</taxon>
        <taxon>Mycobacteriaceae</taxon>
        <taxon>Mycolicibacterium</taxon>
    </lineage>
</organism>
<evidence type="ECO:0000269" key="1">
    <source>
    </source>
</evidence>
<evidence type="ECO:0000269" key="2">
    <source>
    </source>
</evidence>
<evidence type="ECO:0000303" key="3">
    <source>
    </source>
</evidence>
<evidence type="ECO:0000305" key="4"/>
<evidence type="ECO:0000305" key="5">
    <source>
    </source>
</evidence>
<evidence type="ECO:0000312" key="6">
    <source>
        <dbReference type="EMBL" id="ABK69637.1"/>
    </source>
</evidence>
<evidence type="ECO:0000312" key="7">
    <source>
        <dbReference type="EMBL" id="AFP37095.1"/>
    </source>
</evidence>
<evidence type="ECO:0007744" key="8">
    <source>
        <dbReference type="PDB" id="1TEX"/>
    </source>
</evidence>
<comment type="function">
    <text evidence="1">Catalyzes the sulfuryl group transfer from 3'-phosphoadenosine-5'-phosphosulfate (PAPS) to trehalose, leading to trehalose-2-sulfate (T2S). The sulfation of trehalose is the first step in the biosynthesis of sulfolipid-1 (SL-1), a major cell wall glycolipid in pathogenic mycobacteria. Cannot use free glucose and unnatural stereoisomers of trehalose (alpha,beta (neo-trehalose) and beta,beta (iso-trehalose)) as substrates.</text>
</comment>
<comment type="catalytic activity">
    <reaction evidence="1">
        <text>alpha,alpha-trehalose + 3'-phosphoadenylyl sulfate = 2-O-sulfo-alpha,alpha-trehalose + adenosine 3',5'-bisphosphate + H(+)</text>
        <dbReference type="Rhea" id="RHEA:41608"/>
        <dbReference type="ChEBI" id="CHEBI:15378"/>
        <dbReference type="ChEBI" id="CHEBI:16551"/>
        <dbReference type="ChEBI" id="CHEBI:58339"/>
        <dbReference type="ChEBI" id="CHEBI:58343"/>
        <dbReference type="ChEBI" id="CHEBI:60091"/>
        <dbReference type="EC" id="2.8.2.37"/>
    </reaction>
</comment>
<comment type="biophysicochemical properties">
    <kinetics>
        <KM evidence="2">18 uM for 3'-phosphoadenylyl sulfate</KM>
        <KM evidence="1">18 mM for alpha,alpha-trehalose</KM>
        <KM evidence="2">15 mM for alpha,alpha-trehalose</KM>
        <text evidence="1 2">kcat is 1.6 sec(-1) (PubMed:15258569). kcat is 134 min(-1) toward trehalose and 96 min(-1) toward PAPS (PubMed:15866533).</text>
    </kinetics>
</comment>
<comment type="pathway">
    <text evidence="1">Glycolipid metabolism.</text>
</comment>
<comment type="subunit">
    <text evidence="1">Homodimer.</text>
</comment>
<comment type="disruption phenotype">
    <text evidence="1">Loss of trehalose-2-sulfate (T2S) formation.</text>
</comment>
<comment type="miscellaneous">
    <text evidence="2">The reaction catalyzed by Stf0 follows a rapid equilibrium random sequential Bi-Bi mechanism with formation of a ternary complex intermediate.</text>
</comment>
<comment type="similarity">
    <text evidence="4">Belongs to the Stf0 sulfotransferase family.</text>
</comment>
<proteinExistence type="evidence at protein level"/>
<accession>A0QQ53</accession>
<dbReference type="EC" id="2.8.2.37" evidence="1"/>
<dbReference type="EMBL" id="CP000480">
    <property type="protein sequence ID" value="ABK69637.1"/>
    <property type="molecule type" value="Genomic_DNA"/>
</dbReference>
<dbReference type="EMBL" id="CP001663">
    <property type="protein sequence ID" value="AFP37095.1"/>
    <property type="molecule type" value="Genomic_DNA"/>
</dbReference>
<dbReference type="RefSeq" id="WP_011727079.1">
    <property type="nucleotide sequence ID" value="NZ_SIJM01000009.1"/>
</dbReference>
<dbReference type="RefSeq" id="YP_885041.1">
    <property type="nucleotide sequence ID" value="NC_008596.1"/>
</dbReference>
<dbReference type="PDB" id="1TEX">
    <property type="method" value="X-ray"/>
    <property type="resolution" value="2.60 A"/>
    <property type="chains" value="A/B/C/D=1-267"/>
</dbReference>
<dbReference type="PDBsum" id="1TEX"/>
<dbReference type="SMR" id="A0QQ53"/>
<dbReference type="STRING" id="246196.MSMEG_0630"/>
<dbReference type="PaxDb" id="246196-MSMEI_0614"/>
<dbReference type="KEGG" id="msb:LJ00_03130"/>
<dbReference type="KEGG" id="msg:MSMEI_0614"/>
<dbReference type="KEGG" id="msm:MSMEG_0630"/>
<dbReference type="PATRIC" id="fig|246196.19.peg.626"/>
<dbReference type="eggNOG" id="COG4424">
    <property type="taxonomic scope" value="Bacteria"/>
</dbReference>
<dbReference type="OrthoDB" id="5562925at2"/>
<dbReference type="Proteomes" id="UP000000757">
    <property type="component" value="Chromosome"/>
</dbReference>
<dbReference type="Proteomes" id="UP000006158">
    <property type="component" value="Chromosome"/>
</dbReference>
<dbReference type="GO" id="GO:0016740">
    <property type="term" value="F:transferase activity"/>
    <property type="evidence" value="ECO:0007669"/>
    <property type="project" value="UniProtKB-KW"/>
</dbReference>
<dbReference type="Gene3D" id="3.40.50.300">
    <property type="entry name" value="P-loop containing nucleotide triphosphate hydrolases"/>
    <property type="match status" value="1"/>
</dbReference>
<dbReference type="InterPro" id="IPR027417">
    <property type="entry name" value="P-loop_NTPase"/>
</dbReference>
<dbReference type="InterPro" id="IPR015124">
    <property type="entry name" value="Stf0"/>
</dbReference>
<dbReference type="InterPro" id="IPR024628">
    <property type="entry name" value="Sulfotransferase_Stf0_dom"/>
</dbReference>
<dbReference type="NCBIfam" id="NF047724">
    <property type="entry name" value="TrhSuTaseStf0"/>
    <property type="match status" value="1"/>
</dbReference>
<dbReference type="Pfam" id="PF09037">
    <property type="entry name" value="Sulphotransf"/>
    <property type="match status" value="1"/>
</dbReference>
<dbReference type="PIRSF" id="PIRSF021497">
    <property type="entry name" value="Sulphotransferase_Stf0"/>
    <property type="match status" value="1"/>
</dbReference>
<dbReference type="SUPFAM" id="SSF52540">
    <property type="entry name" value="P-loop containing nucleoside triphosphate hydrolases"/>
    <property type="match status" value="1"/>
</dbReference>
<keyword id="KW-0002">3D-structure</keyword>
<keyword id="KW-0119">Carbohydrate metabolism</keyword>
<keyword id="KW-1185">Reference proteome</keyword>
<keyword id="KW-0808">Transferase</keyword>
<name>STF0_MYCS2</name>